<accession>Q10569</accession>
<proteinExistence type="evidence at protein level"/>
<feature type="chain" id="PRO_0000074386" description="Cleavage and polyadenylation specificity factor subunit 1">
    <location>
        <begin position="1"/>
        <end position="1444"/>
    </location>
</feature>
<feature type="region of interest" description="Disordered" evidence="6">
    <location>
        <begin position="406"/>
        <end position="439"/>
    </location>
</feature>
<feature type="region of interest" description="Disordered" evidence="6">
    <location>
        <begin position="549"/>
        <end position="571"/>
    </location>
</feature>
<feature type="region of interest" description="Disordered" evidence="6">
    <location>
        <begin position="716"/>
        <end position="778"/>
    </location>
</feature>
<feature type="region of interest" description="Disordered" evidence="6">
    <location>
        <begin position="902"/>
        <end position="924"/>
    </location>
</feature>
<feature type="short sequence motif" description="Nuclear localization signal" evidence="5">
    <location>
        <begin position="894"/>
        <end position="909"/>
    </location>
</feature>
<feature type="compositionally biased region" description="Basic and acidic residues" evidence="6">
    <location>
        <begin position="413"/>
        <end position="422"/>
    </location>
</feature>
<feature type="compositionally biased region" description="Basic and acidic residues" evidence="6">
    <location>
        <begin position="759"/>
        <end position="776"/>
    </location>
</feature>
<feature type="modified residue" description="Phosphoserine" evidence="4">
    <location>
        <position position="757"/>
    </location>
</feature>
<feature type="modified residue" description="Phosphoserine" evidence="3">
    <location>
        <position position="767"/>
    </location>
</feature>
<organism>
    <name type="scientific">Bos taurus</name>
    <name type="common">Bovine</name>
    <dbReference type="NCBI Taxonomy" id="9913"/>
    <lineage>
        <taxon>Eukaryota</taxon>
        <taxon>Metazoa</taxon>
        <taxon>Chordata</taxon>
        <taxon>Craniata</taxon>
        <taxon>Vertebrata</taxon>
        <taxon>Euteleostomi</taxon>
        <taxon>Mammalia</taxon>
        <taxon>Eutheria</taxon>
        <taxon>Laurasiatheria</taxon>
        <taxon>Artiodactyla</taxon>
        <taxon>Ruminantia</taxon>
        <taxon>Pecora</taxon>
        <taxon>Bovidae</taxon>
        <taxon>Bovinae</taxon>
        <taxon>Bos</taxon>
    </lineage>
</organism>
<evidence type="ECO:0000250" key="1"/>
<evidence type="ECO:0000250" key="2">
    <source>
        <dbReference type="UniProtKB" id="A0A0R4IC37"/>
    </source>
</evidence>
<evidence type="ECO:0000250" key="3">
    <source>
        <dbReference type="UniProtKB" id="Q10570"/>
    </source>
</evidence>
<evidence type="ECO:0000250" key="4">
    <source>
        <dbReference type="UniProtKB" id="Q9EPU4"/>
    </source>
</evidence>
<evidence type="ECO:0000255" key="5"/>
<evidence type="ECO:0000256" key="6">
    <source>
        <dbReference type="SAM" id="MobiDB-lite"/>
    </source>
</evidence>
<evidence type="ECO:0000305" key="7"/>
<sequence length="1444" mass="161214">MYAVYKQAHPPTGLEFSMYCNFFNNSERNLVVAGTSQLYVYRLNRDSEAPTKNDRSTDGKAHREHREKLELVASFSFFGNVMSMASVQLAGAKRDALLLSFKDAKLSVVEYDPGTHDLKTLSLHYFEEPELRDGFVQNVHTPRVRVDPDGRCAAMLIYGTRLVVLPFRRESLAEEHEGLVGEGQRSSFLPSYIIDVRALDEKLLNIVDLQFLHGYYEPTLLILFEPNQTWPGRVAVRQDTCSIVAISLNITQKVHPVIWSLTSLPFDCTQALAVPKPIGGVVIFAVNSLLYLNQSVPPYGVALNSLTTGTTAFPLRTQEGVRITLDCAQAAFISYDKMVISLKGGEIYVLTLITDGMRSVRAFHFDKAAASVLTTSMVTMEPGYLFLGSRLGNSLLLKYTEKLQEPPASTAREAADKEEPPSKKKRVDATTGWSGSKSVPQDEVDEIEVYGSEAQSGTQLATYSFEVCDSILNIGPCANAAMGEPAFLSEEFQNSPEPDLEIVVCSGYGKNGALSVLQKSIRPQVVTTFELPGCYDMWTVIAPVRKEQEETLKGEGTEPEPGAPEAEDDGRRHGFLILSREDSTMILQTGQEIMELDASGFATQGPTVFAGNIGDNRYIVQVSPLGIRLLEGVNQLHFIPVDLGSPIVQCAVADPYVVIMSAEGHVTMFLLKNDSYGGRHHRLALHKPPLHHQSKVITLCVYRDVSGMFTTESRLGGVRDELGGRGGPEAEGQGAETSPTVDDEEEMLYGDSGSLFSPSKEEARRSSQPPADRDPAPFRAEPTHWCLLVRENGAMEIYQLPDWRLVFLVKNFPVGQRVLVDSSFGQPTTQGEARKEEATRQGELPLVKEVLLVALGSRQRRPYLLVHVDQELLIYEAFPHDSQLGQGNLKVRFKKVPHNINFREKKPKPSKKKAEGGSTEEGTGPRGRVARFRYFEDIYGYSGVFICGPSPHWLLVTGRGALRLHPMGIDGPIDSFAPFHNINCPRGFLYFNRQGELRISVLPAYLSYDAPWPVRKIPLRCTAHYVAYHVESKVYAVATSTSTPCTRVPRMTGEEKEFETIERDERYVHPQQEAFCIQLISPVSWEAIPNARIELEEWEHVTCMKTVSLRSEETVSGLKGYVAAGTCLMQGEEVTCRGRILIMDVIEVVPEPGQPLTKNKFKVLYEKEQKGPVTALCHCNGHLVSAIGQKIFLWSLRASELTGMAFIDTQLYIHQMISVKNFILAADVMKSISLLRYQEESKTLSLVSRDAKPLEVYSVDFMVDNAQLGFLVSDRDRNLMVYMYLPEAKESFGGMRLLRRADFHVGAHVNTFWRTPCRGAAEGPSKKSVVWENKHITWFATLDGGIGLLLPMQEKTYRRLLMLQNALTTMLPHHAGLNPRAFRMLHVDRRVLQNAVRNVLDGELLNRYLYLSTMERGELAKKIGTTPDIILDDLLETDRVTAHF</sequence>
<keyword id="KW-0903">Direct protein sequencing</keyword>
<keyword id="KW-0507">mRNA processing</keyword>
<keyword id="KW-0539">Nucleus</keyword>
<keyword id="KW-0597">Phosphoprotein</keyword>
<keyword id="KW-1185">Reference proteome</keyword>
<keyword id="KW-0694">RNA-binding</keyword>
<gene>
    <name type="primary">CPSF1</name>
    <name type="synonym">CPSF160</name>
</gene>
<dbReference type="EMBL" id="X83097">
    <property type="protein sequence ID" value="CAA58152.1"/>
    <property type="molecule type" value="mRNA"/>
</dbReference>
<dbReference type="PIR" id="S57335">
    <property type="entry name" value="S57335"/>
</dbReference>
<dbReference type="RefSeq" id="NP_777145.1">
    <property type="nucleotide sequence ID" value="NM_174720.3"/>
</dbReference>
<dbReference type="SMR" id="Q10569"/>
<dbReference type="FunCoup" id="Q10569">
    <property type="interactions" value="3091"/>
</dbReference>
<dbReference type="IntAct" id="Q10569">
    <property type="interactions" value="1"/>
</dbReference>
<dbReference type="MINT" id="Q10569"/>
<dbReference type="STRING" id="9913.ENSBTAP00000071935"/>
<dbReference type="PaxDb" id="9913-ENSBTAP00000011004"/>
<dbReference type="GeneID" id="282703"/>
<dbReference type="KEGG" id="bta:282703"/>
<dbReference type="CTD" id="29894"/>
<dbReference type="eggNOG" id="KOG1896">
    <property type="taxonomic scope" value="Eukaryota"/>
</dbReference>
<dbReference type="HOGENOM" id="CLU_002414_0_0_1"/>
<dbReference type="InParanoid" id="Q10569"/>
<dbReference type="OrthoDB" id="6109at2759"/>
<dbReference type="TreeFam" id="TF314322"/>
<dbReference type="Proteomes" id="UP000009136">
    <property type="component" value="Unplaced"/>
</dbReference>
<dbReference type="GO" id="GO:0005847">
    <property type="term" value="C:mRNA cleavage and polyadenylation specificity factor complex"/>
    <property type="evidence" value="ECO:0000250"/>
    <property type="project" value="UniProtKB"/>
</dbReference>
<dbReference type="GO" id="GO:0005654">
    <property type="term" value="C:nucleoplasm"/>
    <property type="evidence" value="ECO:0007669"/>
    <property type="project" value="UniProtKB-SubCell"/>
</dbReference>
<dbReference type="GO" id="GO:0005634">
    <property type="term" value="C:nucleus"/>
    <property type="evidence" value="ECO:0000318"/>
    <property type="project" value="GO_Central"/>
</dbReference>
<dbReference type="GO" id="GO:0003723">
    <property type="term" value="F:RNA binding"/>
    <property type="evidence" value="ECO:0007669"/>
    <property type="project" value="UniProtKB-KW"/>
</dbReference>
<dbReference type="GO" id="GO:0006397">
    <property type="term" value="P:mRNA processing"/>
    <property type="evidence" value="ECO:0007669"/>
    <property type="project" value="UniProtKB-KW"/>
</dbReference>
<dbReference type="FunFam" id="2.130.10.10:FF:002223">
    <property type="entry name" value="Cleavage and polyadenylation specific factor 1"/>
    <property type="match status" value="1"/>
</dbReference>
<dbReference type="FunFam" id="2.130.10.10:FF:001659">
    <property type="entry name" value="Cleavage and polyadenylation specific factor 1, 160kDa (Predicted), isoform CRA_a"/>
    <property type="match status" value="1"/>
</dbReference>
<dbReference type="FunFam" id="2.130.10.10:FF:000118">
    <property type="entry name" value="Cleavage and polyadenylation specificity factor subunit 1"/>
    <property type="match status" value="1"/>
</dbReference>
<dbReference type="Gene3D" id="2.130.10.10">
    <property type="entry name" value="YVTN repeat-like/Quinoprotein amine dehydrogenase"/>
    <property type="match status" value="2"/>
</dbReference>
<dbReference type="InterPro" id="IPR018846">
    <property type="entry name" value="Beta-prop_RSE1/DDB1/CPSF1_1st"/>
</dbReference>
<dbReference type="InterPro" id="IPR004871">
    <property type="entry name" value="Cleavage/polyA-sp_fac_asu_C"/>
</dbReference>
<dbReference type="InterPro" id="IPR050358">
    <property type="entry name" value="RSE1/DDB1/CFT1/CPSF1"/>
</dbReference>
<dbReference type="InterPro" id="IPR015943">
    <property type="entry name" value="WD40/YVTN_repeat-like_dom_sf"/>
</dbReference>
<dbReference type="PANTHER" id="PTHR10644">
    <property type="entry name" value="DNA REPAIR/RNA PROCESSING CPSF FAMILY"/>
    <property type="match status" value="1"/>
</dbReference>
<dbReference type="Pfam" id="PF10433">
    <property type="entry name" value="Beta-prop_RSE1_1st"/>
    <property type="match status" value="1"/>
</dbReference>
<dbReference type="Pfam" id="PF23726">
    <property type="entry name" value="Beta-prop_RSE1_2nd"/>
    <property type="match status" value="1"/>
</dbReference>
<dbReference type="Pfam" id="PF03178">
    <property type="entry name" value="CPSF_A"/>
    <property type="match status" value="1"/>
</dbReference>
<reference key="1">
    <citation type="journal article" date="1995" name="Nucleic Acids Res.">
        <title>Cloning of cDNAs encoding the 160 kDa subunit of the bovine cleavage and polyadenylation specificity factor.</title>
        <authorList>
            <person name="Jenny A."/>
            <person name="Keller W."/>
        </authorList>
    </citation>
    <scope>NUCLEOTIDE SEQUENCE [MRNA]</scope>
    <scope>PARTIAL PROTEIN SEQUENCE</scope>
    <source>
        <tissue>Thymus</tissue>
    </source>
</reference>
<reference key="2">
    <citation type="journal article" date="1991" name="EMBO J.">
        <title>Cleavage and polyadenylation factor CPF specifically interacts with the pre-mRNA 3' processing signal AAUAAA.</title>
        <authorList>
            <person name="Keller W."/>
            <person name="Bienroth S."/>
            <person name="Lang K.M."/>
            <person name="Christofori G."/>
        </authorList>
    </citation>
    <scope>CHARACTERIZATION</scope>
</reference>
<comment type="function">
    <text evidence="2 3">Component of the cleavage and polyadenylation specificity factor (CPSF) complex that plays a key role in pre-mRNA 3'-end formation, recognizing the AAUAAA signal sequence and interacting with poly(A) polymerase and other factors to bring about cleavage and poly(A) addition. This subunit is involved in the RNA recognition step of the polyadenylation reaction (By similarity). May play a role in eye morphogenesis and the development of retinal ganglion cell projections to the midbrain (By similarity).</text>
</comment>
<comment type="subunit">
    <text evidence="1">Component of the cleavage and polyadenylation specificity factor (CPSF) complex, composed of CPSF1, CPSF2, CPSF3, CPSF4 and FIP1L1. Found in a complex with CPSF1, FIP1L1 and PAPOLA. Interacts with FIP1L1, TENT2/GLD2 and SRRM1. Interacts with TUT1; the interaction is direct and mediates the recruitment of the CPSF complex on the 3'UTR of selected pre-mRNAs (By similarity).</text>
</comment>
<comment type="subcellular location">
    <subcellularLocation>
        <location>Nucleus</location>
        <location>Nucleoplasm</location>
    </subcellularLocation>
</comment>
<comment type="PTM">
    <text>The N-terminus is blocked.</text>
</comment>
<comment type="similarity">
    <text evidence="7">Belongs to the CPSF1 family.</text>
</comment>
<protein>
    <recommendedName>
        <fullName>Cleavage and polyadenylation specificity factor subunit 1</fullName>
    </recommendedName>
    <alternativeName>
        <fullName>Cleavage and polyadenylation specificity factor 160 kDa subunit</fullName>
        <shortName>CPSF 160 kDa subunit</shortName>
    </alternativeName>
</protein>
<name>CPSF1_BOVIN</name>